<name>MIAB_STRCO</name>
<keyword id="KW-0004">4Fe-4S</keyword>
<keyword id="KW-0963">Cytoplasm</keyword>
<keyword id="KW-0408">Iron</keyword>
<keyword id="KW-0411">Iron-sulfur</keyword>
<keyword id="KW-0479">Metal-binding</keyword>
<keyword id="KW-1185">Reference proteome</keyword>
<keyword id="KW-0949">S-adenosyl-L-methionine</keyword>
<keyword id="KW-0808">Transferase</keyword>
<keyword id="KW-0819">tRNA processing</keyword>
<dbReference type="EC" id="2.8.4.3" evidence="1"/>
<dbReference type="EMBL" id="AL939125">
    <property type="protein sequence ID" value="CAA18324.1"/>
    <property type="molecule type" value="Genomic_DNA"/>
</dbReference>
<dbReference type="PIR" id="T35107">
    <property type="entry name" value="T35107"/>
</dbReference>
<dbReference type="RefSeq" id="NP_629911.1">
    <property type="nucleotide sequence ID" value="NC_003888.3"/>
</dbReference>
<dbReference type="RefSeq" id="WP_011030453.1">
    <property type="nucleotide sequence ID" value="NZ_VNID01000007.1"/>
</dbReference>
<dbReference type="SMR" id="O69963"/>
<dbReference type="FunCoup" id="O69963">
    <property type="interactions" value="450"/>
</dbReference>
<dbReference type="STRING" id="100226.gene:17763447"/>
<dbReference type="PaxDb" id="100226-SCO5787"/>
<dbReference type="KEGG" id="sco:SCO5787"/>
<dbReference type="PATRIC" id="fig|100226.15.peg.5877"/>
<dbReference type="eggNOG" id="COG0621">
    <property type="taxonomic scope" value="Bacteria"/>
</dbReference>
<dbReference type="HOGENOM" id="CLU_018697_2_2_11"/>
<dbReference type="InParanoid" id="O69963"/>
<dbReference type="OrthoDB" id="9805215at2"/>
<dbReference type="PhylomeDB" id="O69963"/>
<dbReference type="Proteomes" id="UP000001973">
    <property type="component" value="Chromosome"/>
</dbReference>
<dbReference type="GO" id="GO:0005829">
    <property type="term" value="C:cytosol"/>
    <property type="evidence" value="ECO:0000318"/>
    <property type="project" value="GO_Central"/>
</dbReference>
<dbReference type="GO" id="GO:0051539">
    <property type="term" value="F:4 iron, 4 sulfur cluster binding"/>
    <property type="evidence" value="ECO:0000318"/>
    <property type="project" value="GO_Central"/>
</dbReference>
<dbReference type="GO" id="GO:0046872">
    <property type="term" value="F:metal ion binding"/>
    <property type="evidence" value="ECO:0007669"/>
    <property type="project" value="UniProtKB-KW"/>
</dbReference>
<dbReference type="GO" id="GO:0035597">
    <property type="term" value="F:N6-isopentenyladenosine methylthiotransferase activity"/>
    <property type="evidence" value="ECO:0000318"/>
    <property type="project" value="GO_Central"/>
</dbReference>
<dbReference type="GO" id="GO:0035600">
    <property type="term" value="P:tRNA methylthiolation"/>
    <property type="evidence" value="ECO:0000318"/>
    <property type="project" value="GO_Central"/>
</dbReference>
<dbReference type="CDD" id="cd01335">
    <property type="entry name" value="Radical_SAM"/>
    <property type="match status" value="1"/>
</dbReference>
<dbReference type="FunFam" id="3.40.50.12160:FF:000008">
    <property type="entry name" value="tRNA-2-methylthio-N(6)-dimethylallyladenosine synthase"/>
    <property type="match status" value="1"/>
</dbReference>
<dbReference type="FunFam" id="3.80.30.20:FF:000001">
    <property type="entry name" value="tRNA-2-methylthio-N(6)-dimethylallyladenosine synthase 2"/>
    <property type="match status" value="1"/>
</dbReference>
<dbReference type="Gene3D" id="3.40.50.12160">
    <property type="entry name" value="Methylthiotransferase, N-terminal domain"/>
    <property type="match status" value="1"/>
</dbReference>
<dbReference type="Gene3D" id="3.80.30.20">
    <property type="entry name" value="tm_1862 like domain"/>
    <property type="match status" value="1"/>
</dbReference>
<dbReference type="HAMAP" id="MF_01864">
    <property type="entry name" value="tRNA_metthiotr_MiaB"/>
    <property type="match status" value="1"/>
</dbReference>
<dbReference type="InterPro" id="IPR006638">
    <property type="entry name" value="Elp3/MiaA/NifB-like_rSAM"/>
</dbReference>
<dbReference type="InterPro" id="IPR005839">
    <property type="entry name" value="Methylthiotransferase"/>
</dbReference>
<dbReference type="InterPro" id="IPR020612">
    <property type="entry name" value="Methylthiotransferase_CS"/>
</dbReference>
<dbReference type="InterPro" id="IPR013848">
    <property type="entry name" value="Methylthiotransferase_N"/>
</dbReference>
<dbReference type="InterPro" id="IPR038135">
    <property type="entry name" value="Methylthiotransferase_N_sf"/>
</dbReference>
<dbReference type="InterPro" id="IPR006463">
    <property type="entry name" value="MiaB_methiolase"/>
</dbReference>
<dbReference type="InterPro" id="IPR007197">
    <property type="entry name" value="rSAM"/>
</dbReference>
<dbReference type="InterPro" id="IPR023404">
    <property type="entry name" value="rSAM_horseshoe"/>
</dbReference>
<dbReference type="InterPro" id="IPR002792">
    <property type="entry name" value="TRAM_dom"/>
</dbReference>
<dbReference type="NCBIfam" id="TIGR01574">
    <property type="entry name" value="miaB-methiolase"/>
    <property type="match status" value="1"/>
</dbReference>
<dbReference type="NCBIfam" id="TIGR00089">
    <property type="entry name" value="MiaB/RimO family radical SAM methylthiotransferase"/>
    <property type="match status" value="1"/>
</dbReference>
<dbReference type="PANTHER" id="PTHR43020">
    <property type="entry name" value="CDK5 REGULATORY SUBUNIT-ASSOCIATED PROTEIN 1"/>
    <property type="match status" value="1"/>
</dbReference>
<dbReference type="PANTHER" id="PTHR43020:SF2">
    <property type="entry name" value="MITOCHONDRIAL TRNA METHYLTHIOTRANSFERASE CDK5RAP1"/>
    <property type="match status" value="1"/>
</dbReference>
<dbReference type="Pfam" id="PF04055">
    <property type="entry name" value="Radical_SAM"/>
    <property type="match status" value="1"/>
</dbReference>
<dbReference type="Pfam" id="PF00919">
    <property type="entry name" value="UPF0004"/>
    <property type="match status" value="1"/>
</dbReference>
<dbReference type="SFLD" id="SFLDF00273">
    <property type="entry name" value="(dimethylallyl)adenosine_tRNA"/>
    <property type="match status" value="1"/>
</dbReference>
<dbReference type="SFLD" id="SFLDG01082">
    <property type="entry name" value="B12-binding_domain_containing"/>
    <property type="match status" value="1"/>
</dbReference>
<dbReference type="SFLD" id="SFLDG01061">
    <property type="entry name" value="methylthiotransferase"/>
    <property type="match status" value="1"/>
</dbReference>
<dbReference type="SMART" id="SM00729">
    <property type="entry name" value="Elp3"/>
    <property type="match status" value="1"/>
</dbReference>
<dbReference type="SUPFAM" id="SSF102114">
    <property type="entry name" value="Radical SAM enzymes"/>
    <property type="match status" value="1"/>
</dbReference>
<dbReference type="PROSITE" id="PS51449">
    <property type="entry name" value="MTTASE_N"/>
    <property type="match status" value="1"/>
</dbReference>
<dbReference type="PROSITE" id="PS01278">
    <property type="entry name" value="MTTASE_RADICAL"/>
    <property type="match status" value="1"/>
</dbReference>
<dbReference type="PROSITE" id="PS51918">
    <property type="entry name" value="RADICAL_SAM"/>
    <property type="match status" value="1"/>
</dbReference>
<dbReference type="PROSITE" id="PS50926">
    <property type="entry name" value="TRAM"/>
    <property type="match status" value="1"/>
</dbReference>
<sequence>MSSIDRSQSAGGTRTYEVRTYGCQMNVHDSERLSGLLEDAGYVRAPEGADGDADVVVFNTCAVRENADNKLYGNLGHLAPKKASRPGMQIAVGGCLAQKDRDTIVKRAPWVDVVFGTHNIGKLPVLLERARVQEEAQVEIAESLEAFPSTLPTRRESAYAAWVSISVGCNNTCTFCIVPALRGKEKDRRPGDILAEVEALVAEGVSEITLLGQNVNAYGSDIGDREAFSKLLRACGNIDGLERVRFTSPHPRDFTDDVIAAMAETPNAMPQLHMPLQSGSDPVLKAMRRSYRQERYLGIIEKVRAAIPHAAITTDIIVGFPGETEEDFEQTLHVVREARFAQAFTFQYSKRPGTPAAEMENQIPKAVVQERYERLVALQEEISWDENKKQVGRTLELMVAEGEGRKDGATHRLSGRAPDNRLVHFTKPDQEVRPGDVVTVEITYAAPHHLLAEGAVLDVRRTRAGDAWEKRNTAEQAKPAGVLLGLPKIGVPEPQPVVASGCGCD</sequence>
<comment type="function">
    <text evidence="1">Catalyzes the methylthiolation of N6-(dimethylallyl)adenosine (i(6)A), leading to the formation of 2-methylthio-N6-(dimethylallyl)adenosine (ms(2)i(6)A) at position 37 in tRNAs that read codons beginning with uridine.</text>
</comment>
<comment type="catalytic activity">
    <reaction evidence="1">
        <text>N(6)-dimethylallyladenosine(37) in tRNA + (sulfur carrier)-SH + AH2 + 2 S-adenosyl-L-methionine = 2-methylsulfanyl-N(6)-dimethylallyladenosine(37) in tRNA + (sulfur carrier)-H + 5'-deoxyadenosine + L-methionine + A + S-adenosyl-L-homocysteine + 2 H(+)</text>
        <dbReference type="Rhea" id="RHEA:37067"/>
        <dbReference type="Rhea" id="RHEA-COMP:10375"/>
        <dbReference type="Rhea" id="RHEA-COMP:10376"/>
        <dbReference type="Rhea" id="RHEA-COMP:14737"/>
        <dbReference type="Rhea" id="RHEA-COMP:14739"/>
        <dbReference type="ChEBI" id="CHEBI:13193"/>
        <dbReference type="ChEBI" id="CHEBI:15378"/>
        <dbReference type="ChEBI" id="CHEBI:17319"/>
        <dbReference type="ChEBI" id="CHEBI:17499"/>
        <dbReference type="ChEBI" id="CHEBI:29917"/>
        <dbReference type="ChEBI" id="CHEBI:57844"/>
        <dbReference type="ChEBI" id="CHEBI:57856"/>
        <dbReference type="ChEBI" id="CHEBI:59789"/>
        <dbReference type="ChEBI" id="CHEBI:64428"/>
        <dbReference type="ChEBI" id="CHEBI:74415"/>
        <dbReference type="ChEBI" id="CHEBI:74417"/>
        <dbReference type="EC" id="2.8.4.3"/>
    </reaction>
</comment>
<comment type="cofactor">
    <cofactor evidence="1">
        <name>[4Fe-4S] cluster</name>
        <dbReference type="ChEBI" id="CHEBI:49883"/>
    </cofactor>
    <text evidence="1">Binds 2 [4Fe-4S] clusters. One cluster is coordinated with 3 cysteines and an exchangeable S-adenosyl-L-methionine.</text>
</comment>
<comment type="subunit">
    <text evidence="1">Monomer.</text>
</comment>
<comment type="subcellular location">
    <subcellularLocation>
        <location evidence="1">Cytoplasm</location>
    </subcellularLocation>
</comment>
<comment type="similarity">
    <text evidence="1">Belongs to the methylthiotransferase family. MiaB subfamily.</text>
</comment>
<reference key="1">
    <citation type="journal article" date="2002" name="Nature">
        <title>Complete genome sequence of the model actinomycete Streptomyces coelicolor A3(2).</title>
        <authorList>
            <person name="Bentley S.D."/>
            <person name="Chater K.F."/>
            <person name="Cerdeno-Tarraga A.-M."/>
            <person name="Challis G.L."/>
            <person name="Thomson N.R."/>
            <person name="James K.D."/>
            <person name="Harris D.E."/>
            <person name="Quail M.A."/>
            <person name="Kieser H."/>
            <person name="Harper D."/>
            <person name="Bateman A."/>
            <person name="Brown S."/>
            <person name="Chandra G."/>
            <person name="Chen C.W."/>
            <person name="Collins M."/>
            <person name="Cronin A."/>
            <person name="Fraser A."/>
            <person name="Goble A."/>
            <person name="Hidalgo J."/>
            <person name="Hornsby T."/>
            <person name="Howarth S."/>
            <person name="Huang C.-H."/>
            <person name="Kieser T."/>
            <person name="Larke L."/>
            <person name="Murphy L.D."/>
            <person name="Oliver K."/>
            <person name="O'Neil S."/>
            <person name="Rabbinowitsch E."/>
            <person name="Rajandream M.A."/>
            <person name="Rutherford K.M."/>
            <person name="Rutter S."/>
            <person name="Seeger K."/>
            <person name="Saunders D."/>
            <person name="Sharp S."/>
            <person name="Squares R."/>
            <person name="Squares S."/>
            <person name="Taylor K."/>
            <person name="Warren T."/>
            <person name="Wietzorrek A."/>
            <person name="Woodward J.R."/>
            <person name="Barrell B.G."/>
            <person name="Parkhill J."/>
            <person name="Hopwood D.A."/>
        </authorList>
    </citation>
    <scope>NUCLEOTIDE SEQUENCE [LARGE SCALE GENOMIC DNA]</scope>
    <source>
        <strain>ATCC BAA-471 / A3(2) / M145</strain>
    </source>
</reference>
<evidence type="ECO:0000255" key="1">
    <source>
        <dbReference type="HAMAP-Rule" id="MF_01864"/>
    </source>
</evidence>
<evidence type="ECO:0000255" key="2">
    <source>
        <dbReference type="PROSITE-ProRule" id="PRU01266"/>
    </source>
</evidence>
<gene>
    <name evidence="1" type="primary">miaB</name>
    <name type="ordered locus">SCO5787</name>
    <name type="ORF">SC4H2.08</name>
</gene>
<organism>
    <name type="scientific">Streptomyces coelicolor (strain ATCC BAA-471 / A3(2) / M145)</name>
    <dbReference type="NCBI Taxonomy" id="100226"/>
    <lineage>
        <taxon>Bacteria</taxon>
        <taxon>Bacillati</taxon>
        <taxon>Actinomycetota</taxon>
        <taxon>Actinomycetes</taxon>
        <taxon>Kitasatosporales</taxon>
        <taxon>Streptomycetaceae</taxon>
        <taxon>Streptomyces</taxon>
        <taxon>Streptomyces albidoflavus group</taxon>
    </lineage>
</organism>
<feature type="chain" id="PRO_0000374585" description="tRNA-2-methylthio-N(6)-dimethylallyladenosine synthase">
    <location>
        <begin position="1"/>
        <end position="505"/>
    </location>
</feature>
<feature type="domain" description="MTTase N-terminal" evidence="1">
    <location>
        <begin position="14"/>
        <end position="132"/>
    </location>
</feature>
<feature type="domain" description="Radical SAM core" evidence="2">
    <location>
        <begin position="155"/>
        <end position="386"/>
    </location>
</feature>
<feature type="domain" description="TRAM" evidence="1">
    <location>
        <begin position="388"/>
        <end position="456"/>
    </location>
</feature>
<feature type="binding site" evidence="1">
    <location>
        <position position="23"/>
    </location>
    <ligand>
        <name>[4Fe-4S] cluster</name>
        <dbReference type="ChEBI" id="CHEBI:49883"/>
        <label>1</label>
    </ligand>
</feature>
<feature type="binding site" evidence="1">
    <location>
        <position position="61"/>
    </location>
    <ligand>
        <name>[4Fe-4S] cluster</name>
        <dbReference type="ChEBI" id="CHEBI:49883"/>
        <label>1</label>
    </ligand>
</feature>
<feature type="binding site" evidence="1">
    <location>
        <position position="95"/>
    </location>
    <ligand>
        <name>[4Fe-4S] cluster</name>
        <dbReference type="ChEBI" id="CHEBI:49883"/>
        <label>1</label>
    </ligand>
</feature>
<feature type="binding site" evidence="1">
    <location>
        <position position="169"/>
    </location>
    <ligand>
        <name>[4Fe-4S] cluster</name>
        <dbReference type="ChEBI" id="CHEBI:49883"/>
        <label>2</label>
        <note>4Fe-4S-S-AdoMet</note>
    </ligand>
</feature>
<feature type="binding site" evidence="1">
    <location>
        <position position="173"/>
    </location>
    <ligand>
        <name>[4Fe-4S] cluster</name>
        <dbReference type="ChEBI" id="CHEBI:49883"/>
        <label>2</label>
        <note>4Fe-4S-S-AdoMet</note>
    </ligand>
</feature>
<feature type="binding site" evidence="1">
    <location>
        <position position="176"/>
    </location>
    <ligand>
        <name>[4Fe-4S] cluster</name>
        <dbReference type="ChEBI" id="CHEBI:49883"/>
        <label>2</label>
        <note>4Fe-4S-S-AdoMet</note>
    </ligand>
</feature>
<proteinExistence type="inferred from homology"/>
<accession>O69963</accession>
<protein>
    <recommendedName>
        <fullName evidence="1">tRNA-2-methylthio-N(6)-dimethylallyladenosine synthase</fullName>
        <ecNumber evidence="1">2.8.4.3</ecNumber>
    </recommendedName>
    <alternativeName>
        <fullName evidence="1">(Dimethylallyl)adenosine tRNA methylthiotransferase MiaB</fullName>
    </alternativeName>
    <alternativeName>
        <fullName evidence="1">tRNA-i(6)A37 methylthiotransferase</fullName>
    </alternativeName>
</protein>